<protein>
    <recommendedName>
        <fullName evidence="1">Large ribosomal subunit protein bL34</fullName>
    </recommendedName>
    <alternativeName>
        <fullName evidence="3">50S ribosomal protein L34</fullName>
    </alternativeName>
</protein>
<gene>
    <name evidence="1" type="primary">rpmH</name>
    <name type="ordered locus">CBO3648</name>
    <name type="ordered locus">CLC_3647</name>
</gene>
<proteinExistence type="inferred from homology"/>
<name>RL34_CLOBH</name>
<accession>A5I821</accession>
<accession>A7G9A4</accession>
<feature type="chain" id="PRO_1000013319" description="Large ribosomal subunit protein bL34">
    <location>
        <begin position="1"/>
        <end position="44"/>
    </location>
</feature>
<feature type="region of interest" description="Disordered" evidence="2">
    <location>
        <begin position="1"/>
        <end position="44"/>
    </location>
</feature>
<feature type="compositionally biased region" description="Basic residues" evidence="2">
    <location>
        <begin position="7"/>
        <end position="23"/>
    </location>
</feature>
<feature type="compositionally biased region" description="Basic residues" evidence="2">
    <location>
        <begin position="30"/>
        <end position="44"/>
    </location>
</feature>
<comment type="similarity">
    <text evidence="1">Belongs to the bacterial ribosomal protein bL34 family.</text>
</comment>
<dbReference type="EMBL" id="CP000727">
    <property type="protein sequence ID" value="ABS39105.1"/>
    <property type="molecule type" value="Genomic_DNA"/>
</dbReference>
<dbReference type="EMBL" id="AM412317">
    <property type="protein sequence ID" value="CAL85206.1"/>
    <property type="molecule type" value="Genomic_DNA"/>
</dbReference>
<dbReference type="RefSeq" id="WP_003359452.1">
    <property type="nucleotide sequence ID" value="NC_009698.1"/>
</dbReference>
<dbReference type="RefSeq" id="YP_001256126.1">
    <property type="nucleotide sequence ID" value="NC_009495.1"/>
</dbReference>
<dbReference type="RefSeq" id="YP_001389369.1">
    <property type="nucleotide sequence ID" value="NC_009698.1"/>
</dbReference>
<dbReference type="SMR" id="A5I821"/>
<dbReference type="GeneID" id="92940449"/>
<dbReference type="KEGG" id="cbh:CLC_3647"/>
<dbReference type="KEGG" id="cbo:CBO3648"/>
<dbReference type="PATRIC" id="fig|413999.7.peg.3624"/>
<dbReference type="HOGENOM" id="CLU_129938_2_0_9"/>
<dbReference type="PRO" id="PR:A5I821"/>
<dbReference type="Proteomes" id="UP000001986">
    <property type="component" value="Chromosome"/>
</dbReference>
<dbReference type="GO" id="GO:1990904">
    <property type="term" value="C:ribonucleoprotein complex"/>
    <property type="evidence" value="ECO:0007669"/>
    <property type="project" value="UniProtKB-KW"/>
</dbReference>
<dbReference type="GO" id="GO:0005840">
    <property type="term" value="C:ribosome"/>
    <property type="evidence" value="ECO:0007669"/>
    <property type="project" value="UniProtKB-KW"/>
</dbReference>
<dbReference type="GO" id="GO:0003735">
    <property type="term" value="F:structural constituent of ribosome"/>
    <property type="evidence" value="ECO:0007669"/>
    <property type="project" value="InterPro"/>
</dbReference>
<dbReference type="GO" id="GO:0006412">
    <property type="term" value="P:translation"/>
    <property type="evidence" value="ECO:0007669"/>
    <property type="project" value="UniProtKB-UniRule"/>
</dbReference>
<dbReference type="FunFam" id="1.10.287.3980:FF:000001">
    <property type="entry name" value="Mitochondrial ribosomal protein L34"/>
    <property type="match status" value="1"/>
</dbReference>
<dbReference type="Gene3D" id="1.10.287.3980">
    <property type="match status" value="1"/>
</dbReference>
<dbReference type="HAMAP" id="MF_00391">
    <property type="entry name" value="Ribosomal_bL34"/>
    <property type="match status" value="1"/>
</dbReference>
<dbReference type="InterPro" id="IPR000271">
    <property type="entry name" value="Ribosomal_bL34"/>
</dbReference>
<dbReference type="InterPro" id="IPR020939">
    <property type="entry name" value="Ribosomal_bL34_CS"/>
</dbReference>
<dbReference type="NCBIfam" id="TIGR01030">
    <property type="entry name" value="rpmH_bact"/>
    <property type="match status" value="1"/>
</dbReference>
<dbReference type="PANTHER" id="PTHR14503:SF4">
    <property type="entry name" value="LARGE RIBOSOMAL SUBUNIT PROTEIN BL34M"/>
    <property type="match status" value="1"/>
</dbReference>
<dbReference type="PANTHER" id="PTHR14503">
    <property type="entry name" value="MITOCHONDRIAL RIBOSOMAL PROTEIN 34 FAMILY MEMBER"/>
    <property type="match status" value="1"/>
</dbReference>
<dbReference type="Pfam" id="PF00468">
    <property type="entry name" value="Ribosomal_L34"/>
    <property type="match status" value="1"/>
</dbReference>
<dbReference type="PROSITE" id="PS00784">
    <property type="entry name" value="RIBOSOMAL_L34"/>
    <property type="match status" value="1"/>
</dbReference>
<keyword id="KW-1185">Reference proteome</keyword>
<keyword id="KW-0687">Ribonucleoprotein</keyword>
<keyword id="KW-0689">Ribosomal protein</keyword>
<organism>
    <name type="scientific">Clostridium botulinum (strain Hall / ATCC 3502 / NCTC 13319 / Type A)</name>
    <dbReference type="NCBI Taxonomy" id="441771"/>
    <lineage>
        <taxon>Bacteria</taxon>
        <taxon>Bacillati</taxon>
        <taxon>Bacillota</taxon>
        <taxon>Clostridia</taxon>
        <taxon>Eubacteriales</taxon>
        <taxon>Clostridiaceae</taxon>
        <taxon>Clostridium</taxon>
    </lineage>
</organism>
<reference key="1">
    <citation type="journal article" date="2007" name="Genome Res.">
        <title>Genome sequence of a proteolytic (Group I) Clostridium botulinum strain Hall A and comparative analysis of the clostridial genomes.</title>
        <authorList>
            <person name="Sebaihia M."/>
            <person name="Peck M.W."/>
            <person name="Minton N.P."/>
            <person name="Thomson N.R."/>
            <person name="Holden M.T.G."/>
            <person name="Mitchell W.J."/>
            <person name="Carter A.T."/>
            <person name="Bentley S.D."/>
            <person name="Mason D.R."/>
            <person name="Crossman L."/>
            <person name="Paul C.J."/>
            <person name="Ivens A."/>
            <person name="Wells-Bennik M.H.J."/>
            <person name="Davis I.J."/>
            <person name="Cerdeno-Tarraga A.M."/>
            <person name="Churcher C."/>
            <person name="Quail M.A."/>
            <person name="Chillingworth T."/>
            <person name="Feltwell T."/>
            <person name="Fraser A."/>
            <person name="Goodhead I."/>
            <person name="Hance Z."/>
            <person name="Jagels K."/>
            <person name="Larke N."/>
            <person name="Maddison M."/>
            <person name="Moule S."/>
            <person name="Mungall K."/>
            <person name="Norbertczak H."/>
            <person name="Rabbinowitsch E."/>
            <person name="Sanders M."/>
            <person name="Simmonds M."/>
            <person name="White B."/>
            <person name="Whithead S."/>
            <person name="Parkhill J."/>
        </authorList>
    </citation>
    <scope>NUCLEOTIDE SEQUENCE [LARGE SCALE GENOMIC DNA]</scope>
    <source>
        <strain>Hall / ATCC 3502 / NCTC 13319 / Type A</strain>
    </source>
</reference>
<reference key="2">
    <citation type="journal article" date="2007" name="PLoS ONE">
        <title>Analysis of the neurotoxin complex genes in Clostridium botulinum A1-A4 and B1 strains: BoNT/A3, /Ba4 and /B1 clusters are located within plasmids.</title>
        <authorList>
            <person name="Smith T.J."/>
            <person name="Hill K.K."/>
            <person name="Foley B.T."/>
            <person name="Detter J.C."/>
            <person name="Munk A.C."/>
            <person name="Bruce D.C."/>
            <person name="Doggett N.A."/>
            <person name="Smith L.A."/>
            <person name="Marks J.D."/>
            <person name="Xie G."/>
            <person name="Brettin T.S."/>
        </authorList>
    </citation>
    <scope>NUCLEOTIDE SEQUENCE [LARGE SCALE GENOMIC DNA]</scope>
    <source>
        <strain>Hall / ATCC 3502 / NCTC 13319 / Type A</strain>
    </source>
</reference>
<sequence length="44" mass="5506">MFMTYQPKKRQRKKEHGFRKRMKTSSGRNILRKRRQKGRKRLTA</sequence>
<evidence type="ECO:0000255" key="1">
    <source>
        <dbReference type="HAMAP-Rule" id="MF_00391"/>
    </source>
</evidence>
<evidence type="ECO:0000256" key="2">
    <source>
        <dbReference type="SAM" id="MobiDB-lite"/>
    </source>
</evidence>
<evidence type="ECO:0000305" key="3"/>